<organism>
    <name type="scientific">Haemophilus influenzae (strain PittEE)</name>
    <dbReference type="NCBI Taxonomy" id="374930"/>
    <lineage>
        <taxon>Bacteria</taxon>
        <taxon>Pseudomonadati</taxon>
        <taxon>Pseudomonadota</taxon>
        <taxon>Gammaproteobacteria</taxon>
        <taxon>Pasteurellales</taxon>
        <taxon>Pasteurellaceae</taxon>
        <taxon>Haemophilus</taxon>
    </lineage>
</organism>
<dbReference type="EC" id="3.5.1.108" evidence="1"/>
<dbReference type="EMBL" id="CP000671">
    <property type="protein sequence ID" value="ABQ98614.1"/>
    <property type="molecule type" value="Genomic_DNA"/>
</dbReference>
<dbReference type="SMR" id="A5UCW3"/>
<dbReference type="KEGG" id="hip:CGSHiEE_06325"/>
<dbReference type="HOGENOM" id="CLU_046528_1_0_6"/>
<dbReference type="UniPathway" id="UPA00359">
    <property type="reaction ID" value="UER00478"/>
</dbReference>
<dbReference type="GO" id="GO:0016020">
    <property type="term" value="C:membrane"/>
    <property type="evidence" value="ECO:0007669"/>
    <property type="project" value="GOC"/>
</dbReference>
<dbReference type="GO" id="GO:0046872">
    <property type="term" value="F:metal ion binding"/>
    <property type="evidence" value="ECO:0007669"/>
    <property type="project" value="UniProtKB-KW"/>
</dbReference>
<dbReference type="GO" id="GO:0103117">
    <property type="term" value="F:UDP-3-O-acyl-N-acetylglucosamine deacetylase activity"/>
    <property type="evidence" value="ECO:0007669"/>
    <property type="project" value="UniProtKB-UniRule"/>
</dbReference>
<dbReference type="GO" id="GO:0009245">
    <property type="term" value="P:lipid A biosynthetic process"/>
    <property type="evidence" value="ECO:0007669"/>
    <property type="project" value="UniProtKB-UniRule"/>
</dbReference>
<dbReference type="FunFam" id="3.30.1700.10:FF:000001">
    <property type="entry name" value="UDP-3-O-acyl-N-acetylglucosamine deacetylase"/>
    <property type="match status" value="1"/>
</dbReference>
<dbReference type="Gene3D" id="3.30.230.20">
    <property type="entry name" value="lpxc deacetylase, domain 1"/>
    <property type="match status" value="1"/>
</dbReference>
<dbReference type="Gene3D" id="3.30.1700.10">
    <property type="entry name" value="lpxc deacetylase, domain 2"/>
    <property type="match status" value="1"/>
</dbReference>
<dbReference type="HAMAP" id="MF_00388">
    <property type="entry name" value="LpxC"/>
    <property type="match status" value="1"/>
</dbReference>
<dbReference type="InterPro" id="IPR020568">
    <property type="entry name" value="Ribosomal_Su5_D2-typ_SF"/>
</dbReference>
<dbReference type="InterPro" id="IPR004463">
    <property type="entry name" value="UDP-acyl_GlcNac_deAcase"/>
</dbReference>
<dbReference type="InterPro" id="IPR011334">
    <property type="entry name" value="UDP-acyl_GlcNac_deAcase_C"/>
</dbReference>
<dbReference type="InterPro" id="IPR015870">
    <property type="entry name" value="UDP-acyl_N-AcGlcN_deAcase_N"/>
</dbReference>
<dbReference type="NCBIfam" id="TIGR00325">
    <property type="entry name" value="lpxC"/>
    <property type="match status" value="1"/>
</dbReference>
<dbReference type="PANTHER" id="PTHR33694">
    <property type="entry name" value="UDP-3-O-ACYL-N-ACETYLGLUCOSAMINE DEACETYLASE 1, MITOCHONDRIAL-RELATED"/>
    <property type="match status" value="1"/>
</dbReference>
<dbReference type="PANTHER" id="PTHR33694:SF1">
    <property type="entry name" value="UDP-3-O-ACYL-N-ACETYLGLUCOSAMINE DEACETYLASE 1, MITOCHONDRIAL-RELATED"/>
    <property type="match status" value="1"/>
</dbReference>
<dbReference type="Pfam" id="PF03331">
    <property type="entry name" value="LpxC"/>
    <property type="match status" value="1"/>
</dbReference>
<dbReference type="SUPFAM" id="SSF54211">
    <property type="entry name" value="Ribosomal protein S5 domain 2-like"/>
    <property type="match status" value="2"/>
</dbReference>
<sequence>MIKQRTLKQSIKVTGVGLHSGEKVTLTLRPAMPNTGVVYYRTDLNPTVAFPADPNSVRDTMLCTALINEQGVRISTVEHLNAALAGLGIDNIIIEVDAPEIPIMDGSASPFIYLLLDAGIEEQNAAKKFIRIKEYVRVEDGDKWAEFKPYNGFRLDFTIDFDHPAIGKDVRNYEMNFSAQAFVHQISRARTFGFMKDIEYLQSQGLVLGGSLDNAIVLDDYRILNEDGLRFKDELVRHKMLDAIGDLYMAGYNIIGDFKAYKSGHGLNNKLLRAVLANQEAWEFVTFEDKEQVPQGYVAPAQVLI</sequence>
<protein>
    <recommendedName>
        <fullName evidence="1">UDP-3-O-acyl-N-acetylglucosamine deacetylase</fullName>
        <shortName evidence="1">UDP-3-O-acyl-GlcNAc deacetylase</shortName>
        <ecNumber evidence="1">3.5.1.108</ecNumber>
    </recommendedName>
    <alternativeName>
        <fullName evidence="1">UDP-3-O-[R-3-hydroxymyristoyl]-N-acetylglucosamine deacetylase</fullName>
    </alternativeName>
</protein>
<evidence type="ECO:0000255" key="1">
    <source>
        <dbReference type="HAMAP-Rule" id="MF_00388"/>
    </source>
</evidence>
<keyword id="KW-0378">Hydrolase</keyword>
<keyword id="KW-0441">Lipid A biosynthesis</keyword>
<keyword id="KW-0444">Lipid biosynthesis</keyword>
<keyword id="KW-0443">Lipid metabolism</keyword>
<keyword id="KW-0479">Metal-binding</keyword>
<keyword id="KW-0862">Zinc</keyword>
<feature type="chain" id="PRO_1000013207" description="UDP-3-O-acyl-N-acetylglucosamine deacetylase">
    <location>
        <begin position="1"/>
        <end position="305"/>
    </location>
</feature>
<feature type="active site" description="Proton donor" evidence="1">
    <location>
        <position position="265"/>
    </location>
</feature>
<feature type="binding site" evidence="1">
    <location>
        <position position="79"/>
    </location>
    <ligand>
        <name>Zn(2+)</name>
        <dbReference type="ChEBI" id="CHEBI:29105"/>
    </ligand>
</feature>
<feature type="binding site" evidence="1">
    <location>
        <position position="238"/>
    </location>
    <ligand>
        <name>Zn(2+)</name>
        <dbReference type="ChEBI" id="CHEBI:29105"/>
    </ligand>
</feature>
<feature type="binding site" evidence="1">
    <location>
        <position position="242"/>
    </location>
    <ligand>
        <name>Zn(2+)</name>
        <dbReference type="ChEBI" id="CHEBI:29105"/>
    </ligand>
</feature>
<name>LPXC_HAEIE</name>
<gene>
    <name evidence="1" type="primary">lpxC</name>
    <name type="ordered locus">CGSHiEE_06325</name>
</gene>
<comment type="function">
    <text evidence="1">Catalyzes the hydrolysis of UDP-3-O-myristoyl-N-acetylglucosamine to form UDP-3-O-myristoylglucosamine and acetate, the committed step in lipid A biosynthesis.</text>
</comment>
<comment type="catalytic activity">
    <reaction evidence="1">
        <text>a UDP-3-O-[(3R)-3-hydroxyacyl]-N-acetyl-alpha-D-glucosamine + H2O = a UDP-3-O-[(3R)-3-hydroxyacyl]-alpha-D-glucosamine + acetate</text>
        <dbReference type="Rhea" id="RHEA:67816"/>
        <dbReference type="ChEBI" id="CHEBI:15377"/>
        <dbReference type="ChEBI" id="CHEBI:30089"/>
        <dbReference type="ChEBI" id="CHEBI:137740"/>
        <dbReference type="ChEBI" id="CHEBI:173225"/>
        <dbReference type="EC" id="3.5.1.108"/>
    </reaction>
</comment>
<comment type="cofactor">
    <cofactor evidence="1">
        <name>Zn(2+)</name>
        <dbReference type="ChEBI" id="CHEBI:29105"/>
    </cofactor>
</comment>
<comment type="pathway">
    <text evidence="1">Glycolipid biosynthesis; lipid IV(A) biosynthesis; lipid IV(A) from (3R)-3-hydroxytetradecanoyl-[acyl-carrier-protein] and UDP-N-acetyl-alpha-D-glucosamine: step 2/6.</text>
</comment>
<comment type="similarity">
    <text evidence="1">Belongs to the LpxC family.</text>
</comment>
<proteinExistence type="inferred from homology"/>
<reference key="1">
    <citation type="journal article" date="2007" name="Genome Biol.">
        <title>Characterization and modeling of the Haemophilus influenzae core and supragenomes based on the complete genomic sequences of Rd and 12 clinical nontypeable strains.</title>
        <authorList>
            <person name="Hogg J.S."/>
            <person name="Hu F.Z."/>
            <person name="Janto B."/>
            <person name="Boissy R."/>
            <person name="Hayes J."/>
            <person name="Keefe R."/>
            <person name="Post J.C."/>
            <person name="Ehrlich G.D."/>
        </authorList>
    </citation>
    <scope>NUCLEOTIDE SEQUENCE [LARGE SCALE GENOMIC DNA]</scope>
    <source>
        <strain>PittEE</strain>
    </source>
</reference>
<accession>A5UCW3</accession>